<evidence type="ECO:0000255" key="1">
    <source>
        <dbReference type="HAMAP-Rule" id="MF_00537"/>
    </source>
</evidence>
<evidence type="ECO:0000305" key="2"/>
<comment type="function">
    <text evidence="1">Binds 16S rRNA, required for the assembly of 30S particles and may also be responsible for determining the conformation of the 16S rRNA at the A site.</text>
</comment>
<comment type="subunit">
    <text evidence="1">Part of the 30S ribosomal subunit. Contacts proteins S3 and S10.</text>
</comment>
<comment type="similarity">
    <text evidence="1">Belongs to the universal ribosomal protein uS14 family.</text>
</comment>
<protein>
    <recommendedName>
        <fullName evidence="1">Small ribosomal subunit protein uS14</fullName>
    </recommendedName>
    <alternativeName>
        <fullName evidence="2">30S ribosomal protein S14</fullName>
    </alternativeName>
</protein>
<accession>A1S231</accession>
<reference key="1">
    <citation type="submission" date="2006-12" db="EMBL/GenBank/DDBJ databases">
        <title>Complete sequence of Shewanella amazonensis SB2B.</title>
        <authorList>
            <consortium name="US DOE Joint Genome Institute"/>
            <person name="Copeland A."/>
            <person name="Lucas S."/>
            <person name="Lapidus A."/>
            <person name="Barry K."/>
            <person name="Detter J.C."/>
            <person name="Glavina del Rio T."/>
            <person name="Hammon N."/>
            <person name="Israni S."/>
            <person name="Dalin E."/>
            <person name="Tice H."/>
            <person name="Pitluck S."/>
            <person name="Munk A.C."/>
            <person name="Brettin T."/>
            <person name="Bruce D."/>
            <person name="Han C."/>
            <person name="Tapia R."/>
            <person name="Gilna P."/>
            <person name="Schmutz J."/>
            <person name="Larimer F."/>
            <person name="Land M."/>
            <person name="Hauser L."/>
            <person name="Kyrpides N."/>
            <person name="Mikhailova N."/>
            <person name="Fredrickson J."/>
            <person name="Richardson P."/>
        </authorList>
    </citation>
    <scope>NUCLEOTIDE SEQUENCE [LARGE SCALE GENOMIC DNA]</scope>
    <source>
        <strain>ATCC BAA-1098 / SB2B</strain>
    </source>
</reference>
<sequence length="101" mass="11320">MAKTSMKAREAKRAALVAKYAEKRAALKAIINSPESSDDARWDAVLKLQALPRDSSAARQRNRCNQTGRPHGFLRKFGLSRIKLREATMRGEVPGLRKASW</sequence>
<keyword id="KW-1185">Reference proteome</keyword>
<keyword id="KW-0687">Ribonucleoprotein</keyword>
<keyword id="KW-0689">Ribosomal protein</keyword>
<keyword id="KW-0694">RNA-binding</keyword>
<keyword id="KW-0699">rRNA-binding</keyword>
<name>RS14_SHEAM</name>
<proteinExistence type="inferred from homology"/>
<dbReference type="EMBL" id="CP000507">
    <property type="protein sequence ID" value="ABL98437.1"/>
    <property type="molecule type" value="Genomic_DNA"/>
</dbReference>
<dbReference type="RefSeq" id="WP_011758347.1">
    <property type="nucleotide sequence ID" value="NC_008700.1"/>
</dbReference>
<dbReference type="SMR" id="A1S231"/>
<dbReference type="STRING" id="326297.Sama_0226"/>
<dbReference type="KEGG" id="saz:Sama_0226"/>
<dbReference type="eggNOG" id="COG0199">
    <property type="taxonomic scope" value="Bacteria"/>
</dbReference>
<dbReference type="HOGENOM" id="CLU_139869_0_1_6"/>
<dbReference type="OrthoDB" id="9810484at2"/>
<dbReference type="Proteomes" id="UP000009175">
    <property type="component" value="Chromosome"/>
</dbReference>
<dbReference type="GO" id="GO:0005737">
    <property type="term" value="C:cytoplasm"/>
    <property type="evidence" value="ECO:0007669"/>
    <property type="project" value="UniProtKB-ARBA"/>
</dbReference>
<dbReference type="GO" id="GO:0015935">
    <property type="term" value="C:small ribosomal subunit"/>
    <property type="evidence" value="ECO:0007669"/>
    <property type="project" value="TreeGrafter"/>
</dbReference>
<dbReference type="GO" id="GO:0019843">
    <property type="term" value="F:rRNA binding"/>
    <property type="evidence" value="ECO:0007669"/>
    <property type="project" value="UniProtKB-UniRule"/>
</dbReference>
<dbReference type="GO" id="GO:0003735">
    <property type="term" value="F:structural constituent of ribosome"/>
    <property type="evidence" value="ECO:0007669"/>
    <property type="project" value="InterPro"/>
</dbReference>
<dbReference type="GO" id="GO:0006412">
    <property type="term" value="P:translation"/>
    <property type="evidence" value="ECO:0007669"/>
    <property type="project" value="UniProtKB-UniRule"/>
</dbReference>
<dbReference type="FunFam" id="1.10.287.1480:FF:000001">
    <property type="entry name" value="30S ribosomal protein S14"/>
    <property type="match status" value="1"/>
</dbReference>
<dbReference type="Gene3D" id="1.10.287.1480">
    <property type="match status" value="1"/>
</dbReference>
<dbReference type="HAMAP" id="MF_00537">
    <property type="entry name" value="Ribosomal_uS14_1"/>
    <property type="match status" value="1"/>
</dbReference>
<dbReference type="InterPro" id="IPR001209">
    <property type="entry name" value="Ribosomal_uS14"/>
</dbReference>
<dbReference type="InterPro" id="IPR023036">
    <property type="entry name" value="Ribosomal_uS14_bac/plastid"/>
</dbReference>
<dbReference type="InterPro" id="IPR018271">
    <property type="entry name" value="Ribosomal_uS14_CS"/>
</dbReference>
<dbReference type="NCBIfam" id="NF006477">
    <property type="entry name" value="PRK08881.1"/>
    <property type="match status" value="1"/>
</dbReference>
<dbReference type="PANTHER" id="PTHR19836">
    <property type="entry name" value="30S RIBOSOMAL PROTEIN S14"/>
    <property type="match status" value="1"/>
</dbReference>
<dbReference type="PANTHER" id="PTHR19836:SF19">
    <property type="entry name" value="SMALL RIBOSOMAL SUBUNIT PROTEIN US14M"/>
    <property type="match status" value="1"/>
</dbReference>
<dbReference type="Pfam" id="PF00253">
    <property type="entry name" value="Ribosomal_S14"/>
    <property type="match status" value="1"/>
</dbReference>
<dbReference type="SUPFAM" id="SSF57716">
    <property type="entry name" value="Glucocorticoid receptor-like (DNA-binding domain)"/>
    <property type="match status" value="1"/>
</dbReference>
<dbReference type="PROSITE" id="PS00527">
    <property type="entry name" value="RIBOSOMAL_S14"/>
    <property type="match status" value="1"/>
</dbReference>
<gene>
    <name evidence="1" type="primary">rpsN</name>
    <name type="ordered locus">Sama_0226</name>
</gene>
<feature type="chain" id="PRO_1000128569" description="Small ribosomal subunit protein uS14">
    <location>
        <begin position="1"/>
        <end position="101"/>
    </location>
</feature>
<organism>
    <name type="scientific">Shewanella amazonensis (strain ATCC BAA-1098 / SB2B)</name>
    <dbReference type="NCBI Taxonomy" id="326297"/>
    <lineage>
        <taxon>Bacteria</taxon>
        <taxon>Pseudomonadati</taxon>
        <taxon>Pseudomonadota</taxon>
        <taxon>Gammaproteobacteria</taxon>
        <taxon>Alteromonadales</taxon>
        <taxon>Shewanellaceae</taxon>
        <taxon>Shewanella</taxon>
    </lineage>
</organism>